<sequence>MNQNSEGCMKKISSVNLDKLINDFSQIEKKMIESSGKNNILDMQLEKANCLLRVMQTKEVAMKQGENEQLKRNADLMKEKFKMHEQEHRNNIAKLMSEMKIKEEGHKIEKTKLYQDMQKKVKLSEEKNKELIEKKELEISELNAKLRTQEREKQNEMIKLQLEFDAKLARVQIKTKSYPDSTVSPHSIYKRKLQHLQEEKDKEIAVLRNTVRDLEQRLSVSKDSQVKLVGKDPRFKRRRF</sequence>
<keyword id="KW-0175">Coiled coil</keyword>
<keyword id="KW-1185">Reference proteome</keyword>
<evidence type="ECO:0000255" key="1"/>
<evidence type="ECO:0000305" key="2"/>
<gene>
    <name type="primary">CCDC152</name>
</gene>
<protein>
    <recommendedName>
        <fullName>Coiled-coil domain-containing protein 152</fullName>
    </recommendedName>
</protein>
<name>CC152_BOVIN</name>
<reference key="1">
    <citation type="submission" date="2005-11" db="EMBL/GenBank/DDBJ databases">
        <authorList>
            <consortium name="NIH - Mammalian Gene Collection (MGC) project"/>
        </authorList>
    </citation>
    <scope>NUCLEOTIDE SEQUENCE [LARGE SCALE MRNA]</scope>
    <source>
        <strain>Crossbred X Angus</strain>
        <tissue>Liver</tissue>
    </source>
</reference>
<comment type="sequence caution" evidence="2">
    <conflict type="erroneous initiation">
        <sequence resource="EMBL-CDS" id="AAI09508"/>
    </conflict>
</comment>
<dbReference type="EMBL" id="BC109507">
    <property type="protein sequence ID" value="AAI09508.1"/>
    <property type="status" value="ALT_INIT"/>
    <property type="molecule type" value="mRNA"/>
</dbReference>
<dbReference type="SMR" id="Q32LM7"/>
<dbReference type="FunCoup" id="Q32LM7">
    <property type="interactions" value="14"/>
</dbReference>
<dbReference type="STRING" id="9913.ENSBTAP00000044423"/>
<dbReference type="PaxDb" id="9913-ENSBTAP00000044423"/>
<dbReference type="eggNOG" id="ENOG502QRE3">
    <property type="taxonomic scope" value="Eukaryota"/>
</dbReference>
<dbReference type="InParanoid" id="Q32LM7"/>
<dbReference type="OrthoDB" id="10053382at2759"/>
<dbReference type="Proteomes" id="UP000009136">
    <property type="component" value="Unplaced"/>
</dbReference>
<dbReference type="InterPro" id="IPR038827">
    <property type="entry name" value="CCDC152"/>
</dbReference>
<dbReference type="PANTHER" id="PTHR35253">
    <property type="entry name" value="COILED-COIL DOMAIN-CONTAINING PROTEIN 152"/>
    <property type="match status" value="1"/>
</dbReference>
<dbReference type="PANTHER" id="PTHR35253:SF1">
    <property type="entry name" value="COILED-COIL DOMAIN-CONTAINING PROTEIN 152"/>
    <property type="match status" value="1"/>
</dbReference>
<organism>
    <name type="scientific">Bos taurus</name>
    <name type="common">Bovine</name>
    <dbReference type="NCBI Taxonomy" id="9913"/>
    <lineage>
        <taxon>Eukaryota</taxon>
        <taxon>Metazoa</taxon>
        <taxon>Chordata</taxon>
        <taxon>Craniata</taxon>
        <taxon>Vertebrata</taxon>
        <taxon>Euteleostomi</taxon>
        <taxon>Mammalia</taxon>
        <taxon>Eutheria</taxon>
        <taxon>Laurasiatheria</taxon>
        <taxon>Artiodactyla</taxon>
        <taxon>Ruminantia</taxon>
        <taxon>Pecora</taxon>
        <taxon>Bovidae</taxon>
        <taxon>Bovinae</taxon>
        <taxon>Bos</taxon>
    </lineage>
</organism>
<feature type="chain" id="PRO_0000320585" description="Coiled-coil domain-containing protein 152">
    <location>
        <begin position="1"/>
        <end position="240"/>
    </location>
</feature>
<feature type="coiled-coil region" evidence="1">
    <location>
        <begin position="55"/>
        <end position="223"/>
    </location>
</feature>
<proteinExistence type="evidence at transcript level"/>
<accession>Q32LM7</accession>